<organism>
    <name type="scientific">Saccharopolyspora erythraea (strain ATCC 11635 / DSM 40517 / JCM 4748 / NBRC 13426 / NCIMB 8594 / NRRL 2338)</name>
    <dbReference type="NCBI Taxonomy" id="405948"/>
    <lineage>
        <taxon>Bacteria</taxon>
        <taxon>Bacillati</taxon>
        <taxon>Actinomycetota</taxon>
        <taxon>Actinomycetes</taxon>
        <taxon>Pseudonocardiales</taxon>
        <taxon>Pseudonocardiaceae</taxon>
        <taxon>Saccharopolyspora</taxon>
    </lineage>
</organism>
<sequence>MTNSAPVTPRRDLADAPLLAAARGETPRHTPVWFMRQAGRSLPEYRKVREGIPMLQSCLTPDLVCEITAQPVRRHGVDAAILFSDIVLPLHAAGVGLDIVAGTGPVVAEPVRTAADVAALPSLAPEQVSKVGDAVGLLLDELGSTPLIGFAGAPFTLASYLVEGGPSRNHERTKALMHSEPATWHALLEKLADTTLTFLRTQLAAGVDAIQLFDSWAGALSLRDYREFVLPHSRRIFEGVAETPGAAGVPKIHFGVGTGELLGAMRSAGADVVGVDWRVPLDTAAQRLREAGPDQGAPVVQGNLDPAVLFAGWEAVEREVRRILAEGRAAGGHIFNLGHGVLPSTDPGVLTRVVELVHAESAR</sequence>
<dbReference type="EC" id="4.1.1.37" evidence="1"/>
<dbReference type="EMBL" id="AM420293">
    <property type="protein sequence ID" value="CAM01148.1"/>
    <property type="molecule type" value="Genomic_DNA"/>
</dbReference>
<dbReference type="RefSeq" id="WP_009942699.1">
    <property type="nucleotide sequence ID" value="NC_009142.1"/>
</dbReference>
<dbReference type="SMR" id="A4FAS3"/>
<dbReference type="STRING" id="405948.SACE_1836"/>
<dbReference type="KEGG" id="sen:SACE_1836"/>
<dbReference type="eggNOG" id="COG0407">
    <property type="taxonomic scope" value="Bacteria"/>
</dbReference>
<dbReference type="HOGENOM" id="CLU_040933_0_1_11"/>
<dbReference type="OrthoDB" id="9806656at2"/>
<dbReference type="UniPathway" id="UPA00251">
    <property type="reaction ID" value="UER00321"/>
</dbReference>
<dbReference type="Proteomes" id="UP000006728">
    <property type="component" value="Chromosome"/>
</dbReference>
<dbReference type="GO" id="GO:0005829">
    <property type="term" value="C:cytosol"/>
    <property type="evidence" value="ECO:0007669"/>
    <property type="project" value="TreeGrafter"/>
</dbReference>
<dbReference type="GO" id="GO:0004853">
    <property type="term" value="F:uroporphyrinogen decarboxylase activity"/>
    <property type="evidence" value="ECO:0007669"/>
    <property type="project" value="UniProtKB-UniRule"/>
</dbReference>
<dbReference type="GO" id="GO:0006782">
    <property type="term" value="P:protoporphyrinogen IX biosynthetic process"/>
    <property type="evidence" value="ECO:0007669"/>
    <property type="project" value="UniProtKB-UniRule"/>
</dbReference>
<dbReference type="CDD" id="cd00717">
    <property type="entry name" value="URO-D"/>
    <property type="match status" value="1"/>
</dbReference>
<dbReference type="Gene3D" id="3.20.20.210">
    <property type="match status" value="1"/>
</dbReference>
<dbReference type="HAMAP" id="MF_00218">
    <property type="entry name" value="URO_D"/>
    <property type="match status" value="1"/>
</dbReference>
<dbReference type="InterPro" id="IPR038071">
    <property type="entry name" value="UROD/MetE-like_sf"/>
</dbReference>
<dbReference type="InterPro" id="IPR006361">
    <property type="entry name" value="Uroporphyrinogen_deCO2ase_HemE"/>
</dbReference>
<dbReference type="InterPro" id="IPR000257">
    <property type="entry name" value="Uroporphyrinogen_deCOase"/>
</dbReference>
<dbReference type="NCBIfam" id="TIGR01464">
    <property type="entry name" value="hemE"/>
    <property type="match status" value="1"/>
</dbReference>
<dbReference type="PANTHER" id="PTHR21091">
    <property type="entry name" value="METHYLTETRAHYDROFOLATE:HOMOCYSTEINE METHYLTRANSFERASE RELATED"/>
    <property type="match status" value="1"/>
</dbReference>
<dbReference type="PANTHER" id="PTHR21091:SF169">
    <property type="entry name" value="UROPORPHYRINOGEN DECARBOXYLASE"/>
    <property type="match status" value="1"/>
</dbReference>
<dbReference type="Pfam" id="PF01208">
    <property type="entry name" value="URO-D"/>
    <property type="match status" value="1"/>
</dbReference>
<dbReference type="SUPFAM" id="SSF51726">
    <property type="entry name" value="UROD/MetE-like"/>
    <property type="match status" value="1"/>
</dbReference>
<dbReference type="PROSITE" id="PS00906">
    <property type="entry name" value="UROD_1"/>
    <property type="match status" value="1"/>
</dbReference>
<dbReference type="PROSITE" id="PS00907">
    <property type="entry name" value="UROD_2"/>
    <property type="match status" value="1"/>
</dbReference>
<comment type="function">
    <text evidence="1">Catalyzes the decarboxylation of four acetate groups of uroporphyrinogen-III to yield coproporphyrinogen-III.</text>
</comment>
<comment type="catalytic activity">
    <reaction evidence="1">
        <text>uroporphyrinogen III + 4 H(+) = coproporphyrinogen III + 4 CO2</text>
        <dbReference type="Rhea" id="RHEA:19865"/>
        <dbReference type="ChEBI" id="CHEBI:15378"/>
        <dbReference type="ChEBI" id="CHEBI:16526"/>
        <dbReference type="ChEBI" id="CHEBI:57308"/>
        <dbReference type="ChEBI" id="CHEBI:57309"/>
        <dbReference type="EC" id="4.1.1.37"/>
    </reaction>
</comment>
<comment type="pathway">
    <text evidence="1">Porphyrin-containing compound metabolism; protoporphyrin-IX biosynthesis; coproporphyrinogen-III from 5-aminolevulinate: step 4/4.</text>
</comment>
<comment type="subunit">
    <text evidence="1">Homodimer.</text>
</comment>
<comment type="subcellular location">
    <subcellularLocation>
        <location evidence="1">Cytoplasm</location>
    </subcellularLocation>
</comment>
<comment type="similarity">
    <text evidence="1">Belongs to the uroporphyrinogen decarboxylase family.</text>
</comment>
<gene>
    <name evidence="1" type="primary">hemE</name>
    <name type="ordered locus">SACE_1836</name>
</gene>
<protein>
    <recommendedName>
        <fullName evidence="1">Uroporphyrinogen decarboxylase</fullName>
        <shortName evidence="1">UPD</shortName>
        <shortName evidence="1">URO-D</shortName>
        <ecNumber evidence="1">4.1.1.37</ecNumber>
    </recommendedName>
</protein>
<name>DCUP_SACEN</name>
<reference key="1">
    <citation type="journal article" date="2007" name="Nat. Biotechnol.">
        <title>Complete genome sequence of the erythromycin-producing bacterium Saccharopolyspora erythraea NRRL23338.</title>
        <authorList>
            <person name="Oliynyk M."/>
            <person name="Samborskyy M."/>
            <person name="Lester J.B."/>
            <person name="Mironenko T."/>
            <person name="Scott N."/>
            <person name="Dickens S."/>
            <person name="Haydock S.F."/>
            <person name="Leadlay P.F."/>
        </authorList>
    </citation>
    <scope>NUCLEOTIDE SEQUENCE [LARGE SCALE GENOMIC DNA]</scope>
    <source>
        <strain>ATCC 11635 / DSM 40517 / JCM 4748 / NBRC 13426 / NCIMB 8594 / NRRL 2338</strain>
    </source>
</reference>
<evidence type="ECO:0000255" key="1">
    <source>
        <dbReference type="HAMAP-Rule" id="MF_00218"/>
    </source>
</evidence>
<proteinExistence type="inferred from homology"/>
<accession>A4FAS3</accession>
<feature type="chain" id="PRO_0000325691" description="Uroporphyrinogen decarboxylase">
    <location>
        <begin position="1"/>
        <end position="363"/>
    </location>
</feature>
<feature type="binding site" evidence="1">
    <location>
        <begin position="36"/>
        <end position="40"/>
    </location>
    <ligand>
        <name>substrate</name>
    </ligand>
</feature>
<feature type="binding site" evidence="1">
    <location>
        <position position="85"/>
    </location>
    <ligand>
        <name>substrate</name>
    </ligand>
</feature>
<feature type="binding site" evidence="1">
    <location>
        <position position="160"/>
    </location>
    <ligand>
        <name>substrate</name>
    </ligand>
</feature>
<feature type="binding site" evidence="1">
    <location>
        <position position="215"/>
    </location>
    <ligand>
        <name>substrate</name>
    </ligand>
</feature>
<feature type="binding site" evidence="1">
    <location>
        <position position="339"/>
    </location>
    <ligand>
        <name>substrate</name>
    </ligand>
</feature>
<feature type="site" description="Transition state stabilizer" evidence="1">
    <location>
        <position position="85"/>
    </location>
</feature>
<keyword id="KW-0963">Cytoplasm</keyword>
<keyword id="KW-0210">Decarboxylase</keyword>
<keyword id="KW-0456">Lyase</keyword>
<keyword id="KW-0627">Porphyrin biosynthesis</keyword>
<keyword id="KW-1185">Reference proteome</keyword>